<evidence type="ECO:0000250" key="1">
    <source>
        <dbReference type="UniProtKB" id="O43623"/>
    </source>
</evidence>
<evidence type="ECO:0000255" key="2">
    <source>
        <dbReference type="PROSITE-ProRule" id="PRU00042"/>
    </source>
</evidence>
<evidence type="ECO:0000256" key="3">
    <source>
        <dbReference type="SAM" id="MobiDB-lite"/>
    </source>
</evidence>
<evidence type="ECO:0000269" key="4">
    <source>
    </source>
</evidence>
<evidence type="ECO:0000269" key="5">
    <source>
    </source>
</evidence>
<evidence type="ECO:0000269" key="6">
    <source>
    </source>
</evidence>
<evidence type="ECO:0000269" key="7">
    <source>
    </source>
</evidence>
<evidence type="ECO:0000269" key="8">
    <source>
    </source>
</evidence>
<evidence type="ECO:0000305" key="9"/>
<protein>
    <recommendedName>
        <fullName>Zinc finger protein SNAI2</fullName>
    </recommendedName>
    <alternativeName>
        <fullName>Protein slug-alpha</fullName>
    </alternativeName>
    <alternativeName>
        <fullName>Protein snail homolog 2</fullName>
    </alternativeName>
    <alternativeName>
        <fullName>Snail protein homolog Slug</fullName>
        <shortName>xSlu</shortName>
    </alternativeName>
</protein>
<keyword id="KW-0217">Developmental protein</keyword>
<keyword id="KW-0238">DNA-binding</keyword>
<keyword id="KW-0479">Metal-binding</keyword>
<keyword id="KW-0539">Nucleus</keyword>
<keyword id="KW-1185">Reference proteome</keyword>
<keyword id="KW-0677">Repeat</keyword>
<keyword id="KW-0678">Repressor</keyword>
<keyword id="KW-0804">Transcription</keyword>
<keyword id="KW-0805">Transcription regulation</keyword>
<keyword id="KW-0862">Zinc</keyword>
<keyword id="KW-0863">Zinc-finger</keyword>
<comment type="function">
    <text evidence="5 6">Probable transcriptional repressor. Acts downstream of snai1 in the specification of the neural crest and neural crest migration.</text>
</comment>
<comment type="subunit">
    <text evidence="6 7">Interacts (via SNAG domain) with limd1 (via LIM domains), wtip (via LIM domains) and ajuba (via LIM domains) (PubMed:18331720). Interacts with elp3 (PubMed:27189455).</text>
</comment>
<comment type="subcellular location">
    <subcellularLocation>
        <location evidence="9">Nucleus</location>
    </subcellularLocation>
</comment>
<comment type="tissue specificity">
    <text evidence="4 5 8">First expressed on the lateral side of stage 12 embryos. At stage 14, strongly expressed in the lateral neural folds. At stage 16, expressed in pre-migratory neural crest cells. At stage 18, expression is dispersed over the neural plate in a pattern surrounding the rhombomeres. At stage 22, expressed in neural crest derivatives, including the branchial arches and the tissues surrounding the eyes and forebrain. After stage 17, expression is weak in the lateral plate mesoderm, increasing at stage 26, but was down-regulated in the pronephros region at stage 26.</text>
</comment>
<comment type="induction">
    <text evidence="4 8">By a combination of noggin and fgf2/bfgf in ectoderm. By wnt signaling.</text>
</comment>
<comment type="similarity">
    <text evidence="9">Belongs to the snail C2H2-type zinc-finger protein family.</text>
</comment>
<sequence length="266" mass="29895">MPRSFLVKKHFNSAKKPNYGELDNHTVIISPFLYERYPVSVLPQPDIYSSVAYSPITVWTGLLHPPLPSDLSPLSGYPSSLGRVSPPPQSDTSSKDHSGSESPISDEEERLQTKLSDSHAIEAEKFQCSLCSKTYSTFSGLAKHKQLHCDAQSRKSFSCKYCEKEYVSLGALKMHIRTHTLPCVCKICGKAFSRPWLLQGHIRTHTGEKPFSCPHCNRAFADRSNLRAHLQTHSDVKKYQCKNCSKTFSRMSLLHKHEESGCCVAH</sequence>
<feature type="chain" id="PRO_0000047035" description="Zinc finger protein SNAI2">
    <location>
        <begin position="1"/>
        <end position="266"/>
    </location>
</feature>
<feature type="zinc finger region" description="C2H2-type 1" evidence="2">
    <location>
        <begin position="126"/>
        <end position="148"/>
    </location>
</feature>
<feature type="zinc finger region" description="C2H2-type 2" evidence="2">
    <location>
        <begin position="157"/>
        <end position="179"/>
    </location>
</feature>
<feature type="zinc finger region" description="C2H2-type 3" evidence="2">
    <location>
        <begin position="183"/>
        <end position="205"/>
    </location>
</feature>
<feature type="zinc finger region" description="C2H2-type 4" evidence="2">
    <location>
        <begin position="211"/>
        <end position="233"/>
    </location>
</feature>
<feature type="zinc finger region" description="C2H2-type 5; atypical" evidence="2">
    <location>
        <begin position="239"/>
        <end position="262"/>
    </location>
</feature>
<feature type="region of interest" description="SNAG domain" evidence="1">
    <location>
        <begin position="1"/>
        <end position="20"/>
    </location>
</feature>
<feature type="region of interest" description="Disordered" evidence="3">
    <location>
        <begin position="75"/>
        <end position="115"/>
    </location>
</feature>
<gene>
    <name type="primary">snai2</name>
    <name type="synonym">slu</name>
    <name type="synonym">slug</name>
</gene>
<proteinExistence type="evidence at protein level"/>
<name>SNAI2_XENLA</name>
<organism>
    <name type="scientific">Xenopus laevis</name>
    <name type="common">African clawed frog</name>
    <dbReference type="NCBI Taxonomy" id="8355"/>
    <lineage>
        <taxon>Eukaryota</taxon>
        <taxon>Metazoa</taxon>
        <taxon>Chordata</taxon>
        <taxon>Craniata</taxon>
        <taxon>Vertebrata</taxon>
        <taxon>Euteleostomi</taxon>
        <taxon>Amphibia</taxon>
        <taxon>Batrachia</taxon>
        <taxon>Anura</taxon>
        <taxon>Pipoidea</taxon>
        <taxon>Pipidae</taxon>
        <taxon>Xenopodinae</taxon>
        <taxon>Xenopus</taxon>
        <taxon>Xenopus</taxon>
    </lineage>
</organism>
<reference key="1">
    <citation type="journal article" date="1995" name="Development">
        <title>Induction of the prospective neural crest of Xenopus.</title>
        <authorList>
            <person name="Mayor R.M."/>
            <person name="Morgan R.M."/>
            <person name="Sargent M.G."/>
        </authorList>
    </citation>
    <scope>NUCLEOTIDE SEQUENCE [MRNA]</scope>
    <scope>TISSUE SPECIFICITY</scope>
    <scope>INDUCTION</scope>
    <source>
        <tissue>Neurula</tissue>
    </source>
</reference>
<reference key="2">
    <citation type="journal article" date="2001" name="J. Biol. Chem.">
        <title>Cloning and characterization of three Xenopus slug promoters reveal direct regulation by Lef/beta-catenin signaling.</title>
        <authorList>
            <person name="Vallin J."/>
            <person name="Thuret R."/>
            <person name="Giacomello E."/>
            <person name="Faraldo M.M."/>
            <person name="Thiery J.P."/>
            <person name="Broders F."/>
        </authorList>
    </citation>
    <scope>NUCLEOTIDE SEQUENCE [GENOMIC DNA / MRNA]</scope>
    <scope>TISSUE SPECIFICITY</scope>
    <scope>INDUCTION</scope>
    <source>
        <tissue>Neurula</tissue>
    </source>
</reference>
<reference key="3">
    <citation type="submission" date="2003-06" db="EMBL/GenBank/DDBJ databases">
        <authorList>
            <consortium name="NIH - Xenopus Gene Collection (XGC) project"/>
        </authorList>
    </citation>
    <scope>NUCLEOTIDE SEQUENCE [LARGE SCALE MRNA]</scope>
    <source>
        <tissue>Tadpole</tissue>
    </source>
</reference>
<reference key="4">
    <citation type="journal article" date="2003" name="Development">
        <title>Snail precedes slug in the genetic cascade required for the specification and migration of the Xenopus neural crest.</title>
        <authorList>
            <person name="Aybar M.J."/>
            <person name="Nieto M.A."/>
            <person name="Mayor R."/>
        </authorList>
    </citation>
    <scope>FUNCTION</scope>
    <scope>TISSUE SPECIFICITY</scope>
</reference>
<reference key="5">
    <citation type="journal article" date="2008" name="Dev. Cell">
        <title>Ajuba LIM proteins are snail/slug corepressors required for neural crest development in Xenopus.</title>
        <authorList>
            <person name="Langer E.M."/>
            <person name="Feng Y."/>
            <person name="Zhaoyuan H."/>
            <person name="Rauscher F.J. III"/>
            <person name="Kroll K.L."/>
            <person name="Longmore G.D."/>
        </authorList>
    </citation>
    <scope>FUNCTION</scope>
    <scope>INTERACTION WITH LIMD1; AJUBA AND WTIP</scope>
</reference>
<reference key="6">
    <citation type="journal article" date="2016" name="Sci. Rep.">
        <title>Elongator Protein 3 (Elp3) stabilizes Snail1 and regulates neural crest migration in Xenopus.</title>
        <authorList>
            <person name="Yang X."/>
            <person name="Li J."/>
            <person name="Zeng W."/>
            <person name="Li C."/>
            <person name="Mao B."/>
        </authorList>
    </citation>
    <scope>INTERACTION WITH ELP3</scope>
</reference>
<dbReference type="EMBL" id="X80269">
    <property type="protein sequence ID" value="CAA56556.1"/>
    <property type="molecule type" value="mRNA"/>
</dbReference>
<dbReference type="EMBL" id="AF368040">
    <property type="protein sequence ID" value="AAK54137.1"/>
    <property type="molecule type" value="Genomic_DNA"/>
</dbReference>
<dbReference type="EMBL" id="AF368041">
    <property type="protein sequence ID" value="AAK54138.1"/>
    <property type="molecule type" value="mRNA"/>
</dbReference>
<dbReference type="EMBL" id="BC054144">
    <property type="protein sequence ID" value="AAH54144.1"/>
    <property type="molecule type" value="mRNA"/>
</dbReference>
<dbReference type="PIR" id="S52245">
    <property type="entry name" value="S52245"/>
</dbReference>
<dbReference type="RefSeq" id="NP_001079751.1">
    <property type="nucleotide sequence ID" value="NM_001086282.1"/>
</dbReference>
<dbReference type="SMR" id="Q91924"/>
<dbReference type="DNASU" id="379440"/>
<dbReference type="GeneID" id="379440"/>
<dbReference type="KEGG" id="xla:379440"/>
<dbReference type="AGR" id="Xenbase:XB-GENE-6255814"/>
<dbReference type="CTD" id="379440"/>
<dbReference type="Xenbase" id="XB-GENE-6255814">
    <property type="gene designation" value="snai2.L"/>
</dbReference>
<dbReference type="OMA" id="HFNSAKK"/>
<dbReference type="OrthoDB" id="5428132at2759"/>
<dbReference type="Proteomes" id="UP000186698">
    <property type="component" value="Chromosome 6L"/>
</dbReference>
<dbReference type="Bgee" id="379440">
    <property type="expression patterns" value="Expressed in neurula embryo and 18 other cell types or tissues"/>
</dbReference>
<dbReference type="GO" id="GO:0005634">
    <property type="term" value="C:nucleus"/>
    <property type="evidence" value="ECO:0007669"/>
    <property type="project" value="UniProtKB-SubCell"/>
</dbReference>
<dbReference type="GO" id="GO:0000981">
    <property type="term" value="F:DNA-binding transcription factor activity, RNA polymerase II-specific"/>
    <property type="evidence" value="ECO:0000318"/>
    <property type="project" value="GO_Central"/>
</dbReference>
<dbReference type="GO" id="GO:0000978">
    <property type="term" value="F:RNA polymerase II cis-regulatory region sequence-specific DNA binding"/>
    <property type="evidence" value="ECO:0000318"/>
    <property type="project" value="GO_Central"/>
</dbReference>
<dbReference type="GO" id="GO:0008270">
    <property type="term" value="F:zinc ion binding"/>
    <property type="evidence" value="ECO:0007669"/>
    <property type="project" value="UniProtKB-KW"/>
</dbReference>
<dbReference type="GO" id="GO:0014036">
    <property type="term" value="P:neural crest cell fate specification"/>
    <property type="evidence" value="ECO:0000316"/>
    <property type="project" value="UniProtKB"/>
</dbReference>
<dbReference type="GO" id="GO:0001755">
    <property type="term" value="P:neural crest cell migration"/>
    <property type="evidence" value="ECO:0000314"/>
    <property type="project" value="UniProtKB"/>
</dbReference>
<dbReference type="GO" id="GO:0014029">
    <property type="term" value="P:neural crest formation"/>
    <property type="evidence" value="ECO:0000304"/>
    <property type="project" value="AgBase"/>
</dbReference>
<dbReference type="GO" id="GO:0006355">
    <property type="term" value="P:regulation of DNA-templated transcription"/>
    <property type="evidence" value="ECO:0000318"/>
    <property type="project" value="GO_Central"/>
</dbReference>
<dbReference type="FunFam" id="3.30.160.60:FF:000085">
    <property type="entry name" value="Snail zinc finger protein"/>
    <property type="match status" value="1"/>
</dbReference>
<dbReference type="FunFam" id="3.30.160.60:FF:000942">
    <property type="entry name" value="Snail zinc finger protein"/>
    <property type="match status" value="1"/>
</dbReference>
<dbReference type="FunFam" id="3.30.160.60:FF:001114">
    <property type="entry name" value="Zinc finger protein SNAI2"/>
    <property type="match status" value="1"/>
</dbReference>
<dbReference type="FunFam" id="3.30.160.60:FF:000207">
    <property type="entry name" value="zinc finger protein SNAI2"/>
    <property type="match status" value="1"/>
</dbReference>
<dbReference type="Gene3D" id="3.30.160.60">
    <property type="entry name" value="Classic Zinc Finger"/>
    <property type="match status" value="4"/>
</dbReference>
<dbReference type="InterPro" id="IPR050527">
    <property type="entry name" value="Snail/Krueppel_Znf"/>
</dbReference>
<dbReference type="InterPro" id="IPR036236">
    <property type="entry name" value="Znf_C2H2_sf"/>
</dbReference>
<dbReference type="InterPro" id="IPR013087">
    <property type="entry name" value="Znf_C2H2_type"/>
</dbReference>
<dbReference type="PANTHER" id="PTHR24388">
    <property type="entry name" value="ZINC FINGER PROTEIN"/>
    <property type="match status" value="1"/>
</dbReference>
<dbReference type="PANTHER" id="PTHR24388:SF42">
    <property type="entry name" value="ZINC FINGER PROTEIN SNAI2"/>
    <property type="match status" value="1"/>
</dbReference>
<dbReference type="Pfam" id="PF00096">
    <property type="entry name" value="zf-C2H2"/>
    <property type="match status" value="5"/>
</dbReference>
<dbReference type="SMART" id="SM00355">
    <property type="entry name" value="ZnF_C2H2"/>
    <property type="match status" value="5"/>
</dbReference>
<dbReference type="SUPFAM" id="SSF57667">
    <property type="entry name" value="beta-beta-alpha zinc fingers"/>
    <property type="match status" value="3"/>
</dbReference>
<dbReference type="PROSITE" id="PS00028">
    <property type="entry name" value="ZINC_FINGER_C2H2_1"/>
    <property type="match status" value="4"/>
</dbReference>
<dbReference type="PROSITE" id="PS50157">
    <property type="entry name" value="ZINC_FINGER_C2H2_2"/>
    <property type="match status" value="5"/>
</dbReference>
<accession>Q91924</accession>
<accession>Q5D087</accession>